<name>PP14A_MOUSE</name>
<feature type="chain" id="PRO_0000071487" description="Protein phosphatase 1 regulatory subunit 14A">
    <location>
        <begin position="1"/>
        <end position="147"/>
    </location>
</feature>
<feature type="region of interest" description="Disordered" evidence="3">
    <location>
        <begin position="1"/>
        <end position="36"/>
    </location>
</feature>
<feature type="region of interest" description="Inhibitory">
    <location>
        <begin position="35"/>
        <end position="120"/>
    </location>
</feature>
<feature type="region of interest" description="Disordered" evidence="3">
    <location>
        <begin position="118"/>
        <end position="147"/>
    </location>
</feature>
<feature type="compositionally biased region" description="Basic residues" evidence="3">
    <location>
        <begin position="1"/>
        <end position="11"/>
    </location>
</feature>
<feature type="compositionally biased region" description="Basic and acidic residues" evidence="3">
    <location>
        <begin position="138"/>
        <end position="147"/>
    </location>
</feature>
<feature type="modified residue" description="Phosphoserine" evidence="5">
    <location>
        <position position="26"/>
    </location>
</feature>
<feature type="modified residue" description="Phosphothreonine; by PKC" evidence="2">
    <location>
        <position position="38"/>
    </location>
</feature>
<feature type="modified residue" description="Phosphoserine" evidence="2">
    <location>
        <position position="128"/>
    </location>
</feature>
<feature type="modified residue" description="Phosphoserine" evidence="2">
    <location>
        <position position="134"/>
    </location>
</feature>
<feature type="modified residue" description="Phosphoserine" evidence="5">
    <location>
        <position position="136"/>
    </location>
</feature>
<feature type="sequence conflict" description="In Ref. 2; AAK35214." evidence="4" ref="2">
    <original>A</original>
    <variation>G</variation>
    <location>
        <position position="113"/>
    </location>
</feature>
<feature type="sequence conflict" description="In Ref. 2; AAK35214." evidence="4" ref="2">
    <original>L</original>
    <variation>P</variation>
    <location>
        <position position="135"/>
    </location>
</feature>
<gene>
    <name type="primary">Ppp1r14a</name>
    <name type="synonym">Cpi17</name>
</gene>
<sequence length="147" mass="16649">MAAQRLGKRVLSKLQSPSRARGPGGSPSGLQKRHARVTVKYDRRELQRRLDVEKWIDGCLEELYRGRESDMPDEVNIDELLELDSEEERCRKIQGLLEACANPTEDFVQELLAKLRGLHKQPGFPQPSPSDDPSLSPRQDRAHTAPP</sequence>
<reference key="1">
    <citation type="journal article" date="2004" name="Biochem. J.">
        <title>GBPI, a novel gastrointestinal- and brain-specific PP1-inhibitory protein, is activated by PKC and inactivated by PKA.</title>
        <authorList>
            <person name="Liu Q.-R."/>
            <person name="Zhang P.-W."/>
            <person name="Lin Z."/>
            <person name="Li Q.-F."/>
            <person name="Woods A.S."/>
            <person name="Troncoso J."/>
            <person name="Uhl G.R."/>
        </authorList>
    </citation>
    <scope>NUCLEOTIDE SEQUENCE [MRNA]</scope>
    <scope>ALTERNATIVE SPLICING</scope>
    <scope>TISSUE SPECIFICITY</scope>
    <source>
        <strain>C57BL/6J</strain>
        <tissue>Smooth muscle</tissue>
    </source>
</reference>
<reference key="2">
    <citation type="submission" date="2001-02" db="EMBL/GenBank/DDBJ databases">
        <authorList>
            <person name="Yu L."/>
        </authorList>
    </citation>
    <scope>NUCLEOTIDE SEQUENCE [MRNA]</scope>
</reference>
<reference key="3">
    <citation type="journal article" date="2004" name="Genome Res.">
        <title>The status, quality, and expansion of the NIH full-length cDNA project: the Mammalian Gene Collection (MGC).</title>
        <authorList>
            <consortium name="The MGC Project Team"/>
        </authorList>
    </citation>
    <scope>NUCLEOTIDE SEQUENCE [LARGE SCALE MRNA]</scope>
    <source>
        <strain>FVB/N</strain>
        <tissue>Colon</tissue>
    </source>
</reference>
<reference key="4">
    <citation type="journal article" date="2010" name="Cell">
        <title>A tissue-specific atlas of mouse protein phosphorylation and expression.</title>
        <authorList>
            <person name="Huttlin E.L."/>
            <person name="Jedrychowski M.P."/>
            <person name="Elias J.E."/>
            <person name="Goswami T."/>
            <person name="Rad R."/>
            <person name="Beausoleil S.A."/>
            <person name="Villen J."/>
            <person name="Haas W."/>
            <person name="Sowa M.E."/>
            <person name="Gygi S.P."/>
        </authorList>
    </citation>
    <scope>PHOSPHORYLATION [LARGE SCALE ANALYSIS] AT SER-26 AND SER-136</scope>
    <scope>IDENTIFICATION BY MASS SPECTROMETRY [LARGE SCALE ANALYSIS]</scope>
    <source>
        <tissue>Brain</tissue>
        <tissue>Brown adipose tissue</tissue>
        <tissue>Heart</tissue>
        <tissue>Kidney</tissue>
        <tissue>Liver</tissue>
        <tissue>Lung</tissue>
        <tissue>Spleen</tissue>
        <tissue>Testis</tissue>
    </source>
</reference>
<comment type="function">
    <text evidence="1">Inhibitor of PPP1CA. Has over 1000-fold higher inhibitory activity when phosphorylated, creating a molecular switch for regulating the phosphorylation status of PPP1CA substrates and smooth muscle contraction (By similarity).</text>
</comment>
<comment type="subcellular location">
    <subcellularLocation>
        <location evidence="1">Cytoplasm</location>
    </subcellularLocation>
</comment>
<comment type="similarity">
    <text evidence="4">Belongs to the PP1 inhibitor family.</text>
</comment>
<evidence type="ECO:0000250" key="1"/>
<evidence type="ECO:0000250" key="2">
    <source>
        <dbReference type="UniProtKB" id="Q96A00"/>
    </source>
</evidence>
<evidence type="ECO:0000256" key="3">
    <source>
        <dbReference type="SAM" id="MobiDB-lite"/>
    </source>
</evidence>
<evidence type="ECO:0000305" key="4"/>
<evidence type="ECO:0007744" key="5">
    <source>
    </source>
</evidence>
<dbReference type="EMBL" id="AY050672">
    <property type="protein sequence ID" value="AAL25830.1"/>
    <property type="molecule type" value="mRNA"/>
</dbReference>
<dbReference type="EMBL" id="AF352573">
    <property type="protein sequence ID" value="AAK35214.1"/>
    <property type="molecule type" value="mRNA"/>
</dbReference>
<dbReference type="EMBL" id="BC010832">
    <property type="protein sequence ID" value="AAH10832.1"/>
    <property type="molecule type" value="mRNA"/>
</dbReference>
<dbReference type="CCDS" id="CCDS21070.1"/>
<dbReference type="RefSeq" id="NP_081007.2">
    <property type="nucleotide sequence ID" value="NM_026731.3"/>
</dbReference>
<dbReference type="SMR" id="Q91VC7"/>
<dbReference type="BioGRID" id="212861">
    <property type="interactions" value="4"/>
</dbReference>
<dbReference type="FunCoup" id="Q91VC7">
    <property type="interactions" value="31"/>
</dbReference>
<dbReference type="STRING" id="10090.ENSMUSP00000035642"/>
<dbReference type="iPTMnet" id="Q91VC7"/>
<dbReference type="PhosphoSitePlus" id="Q91VC7"/>
<dbReference type="PaxDb" id="10090-ENSMUSP00000035642"/>
<dbReference type="PeptideAtlas" id="Q91VC7"/>
<dbReference type="ProteomicsDB" id="291773"/>
<dbReference type="Antibodypedia" id="3563">
    <property type="antibodies" value="378 antibodies from 35 providers"/>
</dbReference>
<dbReference type="DNASU" id="68458"/>
<dbReference type="Ensembl" id="ENSMUST00000048187.6">
    <property type="protein sequence ID" value="ENSMUSP00000035642.5"/>
    <property type="gene ID" value="ENSMUSG00000037166.6"/>
</dbReference>
<dbReference type="GeneID" id="68458"/>
<dbReference type="KEGG" id="mmu:68458"/>
<dbReference type="UCSC" id="uc009gbn.1">
    <property type="organism name" value="mouse"/>
</dbReference>
<dbReference type="AGR" id="MGI:1931139"/>
<dbReference type="CTD" id="94274"/>
<dbReference type="MGI" id="MGI:1931139">
    <property type="gene designation" value="Ppp1r14a"/>
</dbReference>
<dbReference type="VEuPathDB" id="HostDB:ENSMUSG00000037166"/>
<dbReference type="eggNOG" id="ENOG502S2I4">
    <property type="taxonomic scope" value="Eukaryota"/>
</dbReference>
<dbReference type="GeneTree" id="ENSGT00950000182985"/>
<dbReference type="HOGENOM" id="CLU_114155_2_0_1"/>
<dbReference type="InParanoid" id="Q91VC7"/>
<dbReference type="OMA" id="HGRESEM"/>
<dbReference type="PhylomeDB" id="Q91VC7"/>
<dbReference type="TreeFam" id="TF105546"/>
<dbReference type="Reactome" id="R-MMU-5625740">
    <property type="pathway name" value="RHO GTPases activate PKNs"/>
</dbReference>
<dbReference type="BioGRID-ORCS" id="68458">
    <property type="hits" value="2 hits in 79 CRISPR screens"/>
</dbReference>
<dbReference type="ChiTaRS" id="Ppp1r14a">
    <property type="organism name" value="mouse"/>
</dbReference>
<dbReference type="PRO" id="PR:Q91VC7"/>
<dbReference type="Proteomes" id="UP000000589">
    <property type="component" value="Chromosome 7"/>
</dbReference>
<dbReference type="RNAct" id="Q91VC7">
    <property type="molecule type" value="protein"/>
</dbReference>
<dbReference type="Bgee" id="ENSMUSG00000037166">
    <property type="expression patterns" value="Expressed in aorta tunica media and 187 other cell types or tissues"/>
</dbReference>
<dbReference type="ExpressionAtlas" id="Q91VC7">
    <property type="expression patterns" value="baseline and differential"/>
</dbReference>
<dbReference type="GO" id="GO:0005737">
    <property type="term" value="C:cytoplasm"/>
    <property type="evidence" value="ECO:0007669"/>
    <property type="project" value="UniProtKB-SubCell"/>
</dbReference>
<dbReference type="GO" id="GO:0004864">
    <property type="term" value="F:protein phosphatase inhibitor activity"/>
    <property type="evidence" value="ECO:0007669"/>
    <property type="project" value="UniProtKB-KW"/>
</dbReference>
<dbReference type="GO" id="GO:0071466">
    <property type="term" value="P:cellular response to xenobiotic stimulus"/>
    <property type="evidence" value="ECO:0000314"/>
    <property type="project" value="MGI"/>
</dbReference>
<dbReference type="FunFam" id="1.10.150.220:FF:000002">
    <property type="entry name" value="protein phosphatase 1 regulatory subunit 14A"/>
    <property type="match status" value="1"/>
</dbReference>
<dbReference type="Gene3D" id="1.10.150.220">
    <property type="entry name" value="CPI-17"/>
    <property type="match status" value="1"/>
</dbReference>
<dbReference type="InterPro" id="IPR008025">
    <property type="entry name" value="CPI-17"/>
</dbReference>
<dbReference type="InterPro" id="IPR036658">
    <property type="entry name" value="CPI-17_sf"/>
</dbReference>
<dbReference type="PANTHER" id="PTHR16188">
    <property type="entry name" value="PROTEIN PHOSPHATASE 1 INHIBITOR POTENTIATED BY PROTEIN KINASE C"/>
    <property type="match status" value="1"/>
</dbReference>
<dbReference type="PANTHER" id="PTHR16188:SF4">
    <property type="entry name" value="PROTEIN PHOSPHATASE 1 REGULATORY SUBUNIT 14A"/>
    <property type="match status" value="1"/>
</dbReference>
<dbReference type="Pfam" id="PF05361">
    <property type="entry name" value="PP1_inhibitor"/>
    <property type="match status" value="1"/>
</dbReference>
<dbReference type="SUPFAM" id="SSF81790">
    <property type="entry name" value="Myosin phosphatase inhibitor 17kDa protein, CPI-17"/>
    <property type="match status" value="1"/>
</dbReference>
<organism>
    <name type="scientific">Mus musculus</name>
    <name type="common">Mouse</name>
    <dbReference type="NCBI Taxonomy" id="10090"/>
    <lineage>
        <taxon>Eukaryota</taxon>
        <taxon>Metazoa</taxon>
        <taxon>Chordata</taxon>
        <taxon>Craniata</taxon>
        <taxon>Vertebrata</taxon>
        <taxon>Euteleostomi</taxon>
        <taxon>Mammalia</taxon>
        <taxon>Eutheria</taxon>
        <taxon>Euarchontoglires</taxon>
        <taxon>Glires</taxon>
        <taxon>Rodentia</taxon>
        <taxon>Myomorpha</taxon>
        <taxon>Muroidea</taxon>
        <taxon>Muridae</taxon>
        <taxon>Murinae</taxon>
        <taxon>Mus</taxon>
        <taxon>Mus</taxon>
    </lineage>
</organism>
<accession>Q91VC7</accession>
<accession>Q99MB9</accession>
<protein>
    <recommendedName>
        <fullName>Protein phosphatase 1 regulatory subunit 14A</fullName>
    </recommendedName>
    <alternativeName>
        <fullName>17 kDa PKC-potentiated inhibitory protein of PP1</fullName>
    </alternativeName>
    <alternativeName>
        <fullName>Protein kinase C-potentiated inhibitor protein of 17 kDa</fullName>
        <shortName>CPI-17</shortName>
    </alternativeName>
</protein>
<keyword id="KW-0963">Cytoplasm</keyword>
<keyword id="KW-0597">Phosphoprotein</keyword>
<keyword id="KW-0650">Protein phosphatase inhibitor</keyword>
<keyword id="KW-1185">Reference proteome</keyword>
<proteinExistence type="evidence at protein level"/>